<gene>
    <name evidence="1" type="primary">aroC</name>
    <name type="ordered locus">Tery_2866</name>
</gene>
<evidence type="ECO:0000255" key="1">
    <source>
        <dbReference type="HAMAP-Rule" id="MF_00300"/>
    </source>
</evidence>
<reference key="1">
    <citation type="journal article" date="2015" name="Proc. Natl. Acad. Sci. U.S.A.">
        <title>Trichodesmium genome maintains abundant, widespread noncoding DNA in situ, despite oligotrophic lifestyle.</title>
        <authorList>
            <person name="Walworth N."/>
            <person name="Pfreundt U."/>
            <person name="Nelson W.C."/>
            <person name="Mincer T."/>
            <person name="Heidelberg J.F."/>
            <person name="Fu F."/>
            <person name="Waterbury J.B."/>
            <person name="Glavina del Rio T."/>
            <person name="Goodwin L."/>
            <person name="Kyrpides N.C."/>
            <person name="Land M.L."/>
            <person name="Woyke T."/>
            <person name="Hutchins D.A."/>
            <person name="Hess W.R."/>
            <person name="Webb E.A."/>
        </authorList>
    </citation>
    <scope>NUCLEOTIDE SEQUENCE [LARGE SCALE GENOMIC DNA]</scope>
    <source>
        <strain>IMS101</strain>
    </source>
</reference>
<name>AROC_TRIEI</name>
<feature type="chain" id="PRO_1000022568" description="Chorismate synthase">
    <location>
        <begin position="1"/>
        <end position="370"/>
    </location>
</feature>
<feature type="binding site" evidence="1">
    <location>
        <position position="47"/>
    </location>
    <ligand>
        <name>NADP(+)</name>
        <dbReference type="ChEBI" id="CHEBI:58349"/>
    </ligand>
</feature>
<feature type="binding site" evidence="1">
    <location>
        <begin position="124"/>
        <end position="126"/>
    </location>
    <ligand>
        <name>FMN</name>
        <dbReference type="ChEBI" id="CHEBI:58210"/>
    </ligand>
</feature>
<feature type="binding site" evidence="1">
    <location>
        <position position="286"/>
    </location>
    <ligand>
        <name>FMN</name>
        <dbReference type="ChEBI" id="CHEBI:58210"/>
    </ligand>
</feature>
<feature type="binding site" evidence="1">
    <location>
        <begin position="301"/>
        <end position="305"/>
    </location>
    <ligand>
        <name>FMN</name>
        <dbReference type="ChEBI" id="CHEBI:58210"/>
    </ligand>
</feature>
<feature type="binding site" evidence="1">
    <location>
        <position position="327"/>
    </location>
    <ligand>
        <name>FMN</name>
        <dbReference type="ChEBI" id="CHEBI:58210"/>
    </ligand>
</feature>
<accession>Q110N5</accession>
<keyword id="KW-0028">Amino-acid biosynthesis</keyword>
<keyword id="KW-0057">Aromatic amino acid biosynthesis</keyword>
<keyword id="KW-0274">FAD</keyword>
<keyword id="KW-0285">Flavoprotein</keyword>
<keyword id="KW-0288">FMN</keyword>
<keyword id="KW-0456">Lyase</keyword>
<keyword id="KW-0521">NADP</keyword>
<dbReference type="EC" id="4.2.3.5" evidence="1"/>
<dbReference type="EMBL" id="CP000393">
    <property type="protein sequence ID" value="ABG52039.1"/>
    <property type="molecule type" value="Genomic_DNA"/>
</dbReference>
<dbReference type="RefSeq" id="WP_011612398.1">
    <property type="nucleotide sequence ID" value="NC_008312.1"/>
</dbReference>
<dbReference type="SMR" id="Q110N5"/>
<dbReference type="STRING" id="203124.Tery_2866"/>
<dbReference type="KEGG" id="ter:Tery_2866"/>
<dbReference type="eggNOG" id="COG0082">
    <property type="taxonomic scope" value="Bacteria"/>
</dbReference>
<dbReference type="HOGENOM" id="CLU_034547_0_1_3"/>
<dbReference type="OrthoDB" id="9771806at2"/>
<dbReference type="UniPathway" id="UPA00053">
    <property type="reaction ID" value="UER00090"/>
</dbReference>
<dbReference type="GO" id="GO:0005829">
    <property type="term" value="C:cytosol"/>
    <property type="evidence" value="ECO:0007669"/>
    <property type="project" value="TreeGrafter"/>
</dbReference>
<dbReference type="GO" id="GO:0004107">
    <property type="term" value="F:chorismate synthase activity"/>
    <property type="evidence" value="ECO:0007669"/>
    <property type="project" value="UniProtKB-UniRule"/>
</dbReference>
<dbReference type="GO" id="GO:0010181">
    <property type="term" value="F:FMN binding"/>
    <property type="evidence" value="ECO:0007669"/>
    <property type="project" value="TreeGrafter"/>
</dbReference>
<dbReference type="GO" id="GO:0008652">
    <property type="term" value="P:amino acid biosynthetic process"/>
    <property type="evidence" value="ECO:0007669"/>
    <property type="project" value="UniProtKB-KW"/>
</dbReference>
<dbReference type="GO" id="GO:0009073">
    <property type="term" value="P:aromatic amino acid family biosynthetic process"/>
    <property type="evidence" value="ECO:0007669"/>
    <property type="project" value="UniProtKB-KW"/>
</dbReference>
<dbReference type="GO" id="GO:0009423">
    <property type="term" value="P:chorismate biosynthetic process"/>
    <property type="evidence" value="ECO:0007669"/>
    <property type="project" value="UniProtKB-UniRule"/>
</dbReference>
<dbReference type="CDD" id="cd07304">
    <property type="entry name" value="Chorismate_synthase"/>
    <property type="match status" value="1"/>
</dbReference>
<dbReference type="FunFam" id="3.60.150.10:FF:000003">
    <property type="entry name" value="Chorismate synthase"/>
    <property type="match status" value="1"/>
</dbReference>
<dbReference type="Gene3D" id="3.60.150.10">
    <property type="entry name" value="Chorismate synthase AroC"/>
    <property type="match status" value="1"/>
</dbReference>
<dbReference type="HAMAP" id="MF_00300">
    <property type="entry name" value="Chorismate_synth"/>
    <property type="match status" value="1"/>
</dbReference>
<dbReference type="InterPro" id="IPR000453">
    <property type="entry name" value="Chorismate_synth"/>
</dbReference>
<dbReference type="InterPro" id="IPR035904">
    <property type="entry name" value="Chorismate_synth_AroC_sf"/>
</dbReference>
<dbReference type="InterPro" id="IPR020541">
    <property type="entry name" value="Chorismate_synthase_CS"/>
</dbReference>
<dbReference type="NCBIfam" id="TIGR00033">
    <property type="entry name" value="aroC"/>
    <property type="match status" value="1"/>
</dbReference>
<dbReference type="NCBIfam" id="NF003793">
    <property type="entry name" value="PRK05382.1"/>
    <property type="match status" value="1"/>
</dbReference>
<dbReference type="PANTHER" id="PTHR21085">
    <property type="entry name" value="CHORISMATE SYNTHASE"/>
    <property type="match status" value="1"/>
</dbReference>
<dbReference type="PANTHER" id="PTHR21085:SF0">
    <property type="entry name" value="CHORISMATE SYNTHASE"/>
    <property type="match status" value="1"/>
</dbReference>
<dbReference type="Pfam" id="PF01264">
    <property type="entry name" value="Chorismate_synt"/>
    <property type="match status" value="1"/>
</dbReference>
<dbReference type="PIRSF" id="PIRSF001456">
    <property type="entry name" value="Chorismate_synth"/>
    <property type="match status" value="1"/>
</dbReference>
<dbReference type="SUPFAM" id="SSF103263">
    <property type="entry name" value="Chorismate synthase, AroC"/>
    <property type="match status" value="1"/>
</dbReference>
<dbReference type="PROSITE" id="PS00787">
    <property type="entry name" value="CHORISMATE_SYNTHASE_1"/>
    <property type="match status" value="1"/>
</dbReference>
<dbReference type="PROSITE" id="PS00788">
    <property type="entry name" value="CHORISMATE_SYNTHASE_2"/>
    <property type="match status" value="1"/>
</dbReference>
<dbReference type="PROSITE" id="PS00789">
    <property type="entry name" value="CHORISMATE_SYNTHASE_3"/>
    <property type="match status" value="1"/>
</dbReference>
<protein>
    <recommendedName>
        <fullName evidence="1">Chorismate synthase</fullName>
        <shortName evidence="1">CS</shortName>
        <ecNumber evidence="1">4.2.3.5</ecNumber>
    </recommendedName>
    <alternativeName>
        <fullName evidence="1">5-enolpyruvylshikimate-3-phosphate phospholyase</fullName>
    </alternativeName>
</protein>
<comment type="function">
    <text evidence="1">Catalyzes the anti-1,4-elimination of the C-3 phosphate and the C-6 proR hydrogen from 5-enolpyruvylshikimate-3-phosphate (EPSP) to yield chorismate, which is the branch point compound that serves as the starting substrate for the three terminal pathways of aromatic amino acid biosynthesis. This reaction introduces a second double bond into the aromatic ring system.</text>
</comment>
<comment type="catalytic activity">
    <reaction evidence="1">
        <text>5-O-(1-carboxyvinyl)-3-phosphoshikimate = chorismate + phosphate</text>
        <dbReference type="Rhea" id="RHEA:21020"/>
        <dbReference type="ChEBI" id="CHEBI:29748"/>
        <dbReference type="ChEBI" id="CHEBI:43474"/>
        <dbReference type="ChEBI" id="CHEBI:57701"/>
        <dbReference type="EC" id="4.2.3.5"/>
    </reaction>
</comment>
<comment type="cofactor">
    <cofactor evidence="1">
        <name>FMNH2</name>
        <dbReference type="ChEBI" id="CHEBI:57618"/>
    </cofactor>
    <text evidence="1">Reduced FMN (FMNH(2)).</text>
</comment>
<comment type="pathway">
    <text evidence="1">Metabolic intermediate biosynthesis; chorismate biosynthesis; chorismate from D-erythrose 4-phosphate and phosphoenolpyruvate: step 7/7.</text>
</comment>
<comment type="subunit">
    <text evidence="1">Homotetramer.</text>
</comment>
<comment type="similarity">
    <text evidence="1">Belongs to the chorismate synthase family.</text>
</comment>
<sequence length="370" mass="40442">MGNIFGHLFRVTTFGESHGGGVGVIIDGCPPKLEINVKEIQYELDRRRPGQSKITTPRKESDTCEILSGVFEGQTLGTPIMIWVRNKDARPQDYQDMAIKYRPSHADATYDAKYGIRNWQGGGRSSARETIGRVASGAIAKKILQQYSGVEIVGYVKRIKNLEAIVDPTTVTMEQVESNIVRCPDSECAEKMIELVEKIRDLGDSVGGVVECIVRNVPKGLGSPVFDKLEADLAKGVMSLPATKGFEIGSGFAGTTMTGSEHNDELYTDKLGEIRTVTNRSGGIQGGISNGENIVLRVAFKPTATIRKEQRTVSRQGEETFLAAKGRHDPCVLPRAVPMVEAMVAIVLCDHLLRHYGQCNTLKSENVYGN</sequence>
<proteinExistence type="inferred from homology"/>
<organism>
    <name type="scientific">Trichodesmium erythraeum (strain IMS101)</name>
    <dbReference type="NCBI Taxonomy" id="203124"/>
    <lineage>
        <taxon>Bacteria</taxon>
        <taxon>Bacillati</taxon>
        <taxon>Cyanobacteriota</taxon>
        <taxon>Cyanophyceae</taxon>
        <taxon>Oscillatoriophycideae</taxon>
        <taxon>Oscillatoriales</taxon>
        <taxon>Microcoleaceae</taxon>
        <taxon>Trichodesmium</taxon>
    </lineage>
</organism>